<sequence>EQCGRQAGGALCPGGLCCSQFGWCGSTADYCTVPGCQSQCSGSGPAPGPGGLTNLISRETFNQMLLHRNDGACPARGFYTYDAFIAAARSFPAFATTGDQATRKREIAAFLAQTSHETTGGAGWAAPDGPYAWGYCYNRELNPPSSYCASDPNYPCAPGKQYFGRGPMQLSWNYNYGQCGRAIGVDLLNNPDLLSSDPTISFKSAFWFWMTPQSPKPSCHNVIIGAWSPSSSDRAAGRATGYGVITNIINGGLECGKGWNAQVEDRIGFYKRYCDILGVSYGNNLDCYNQSPFGNGVSVDSM</sequence>
<feature type="chain" id="PRO_0000005294" description="Endochitinase 2">
    <location>
        <begin position="1"/>
        <end position="295"/>
    </location>
</feature>
<feature type="propeptide" id="PRO_0000005295" description="Removed in mature form" evidence="1">
    <location>
        <begin position="296"/>
        <end position="302"/>
    </location>
</feature>
<feature type="domain" description="Chitin-binding type-1" evidence="3">
    <location>
        <begin position="1" status="less than"/>
        <end position="42"/>
    </location>
</feature>
<feature type="active site" description="Proton donor" evidence="2">
    <location>
        <position position="117"/>
    </location>
</feature>
<feature type="disulfide bond" evidence="3">
    <location>
        <begin position="3"/>
        <end position="18"/>
    </location>
</feature>
<feature type="disulfide bond" evidence="3">
    <location>
        <begin position="12"/>
        <end position="24"/>
    </location>
</feature>
<feature type="disulfide bond" evidence="3">
    <location>
        <begin position="17"/>
        <end position="31"/>
    </location>
</feature>
<feature type="disulfide bond" evidence="3">
    <location>
        <begin position="36"/>
        <end position="40"/>
    </location>
</feature>
<feature type="disulfide bond" evidence="3">
    <location>
        <begin position="73"/>
        <end position="136"/>
    </location>
</feature>
<feature type="disulfide bond" evidence="3">
    <location>
        <begin position="148"/>
        <end position="156"/>
    </location>
</feature>
<feature type="disulfide bond" evidence="3">
    <location>
        <begin position="255"/>
        <end position="287"/>
    </location>
</feature>
<feature type="non-terminal residue">
    <location>
        <position position="1"/>
    </location>
</feature>
<protein>
    <recommendedName>
        <fullName>Endochitinase 2</fullName>
        <ecNumber>3.2.1.14</ecNumber>
    </recommendedName>
</protein>
<evidence type="ECO:0000250" key="1"/>
<evidence type="ECO:0000250" key="2">
    <source>
        <dbReference type="UniProtKB" id="P29022"/>
    </source>
</evidence>
<evidence type="ECO:0000255" key="3">
    <source>
        <dbReference type="PROSITE-ProRule" id="PRU00261"/>
    </source>
</evidence>
<evidence type="ECO:0000305" key="4"/>
<name>CHI2_GOSHI</name>
<organism>
    <name type="scientific">Gossypium hirsutum</name>
    <name type="common">Upland cotton</name>
    <name type="synonym">Gossypium mexicanum</name>
    <dbReference type="NCBI Taxonomy" id="3635"/>
    <lineage>
        <taxon>Eukaryota</taxon>
        <taxon>Viridiplantae</taxon>
        <taxon>Streptophyta</taxon>
        <taxon>Embryophyta</taxon>
        <taxon>Tracheophyta</taxon>
        <taxon>Spermatophyta</taxon>
        <taxon>Magnoliopsida</taxon>
        <taxon>eudicotyledons</taxon>
        <taxon>Gunneridae</taxon>
        <taxon>Pentapetalae</taxon>
        <taxon>rosids</taxon>
        <taxon>malvids</taxon>
        <taxon>Malvales</taxon>
        <taxon>Malvaceae</taxon>
        <taxon>Malvoideae</taxon>
        <taxon>Gossypium</taxon>
    </lineage>
</organism>
<reference key="1">
    <citation type="online journal article" date="1997" name="Plant Gene Register">
        <title>Cloning of an ethylene-responsive chitinase from cotton.</title>
        <authorList>
            <person name="Levorson J.P."/>
            <person name="Chlan C.A."/>
        </authorList>
        <locator>PGR97-034</locator>
    </citation>
    <scope>NUCLEOTIDE SEQUENCE</scope>
    <source>
        <strain>cv. Stoneville 887</strain>
        <tissue>Leaf</tissue>
    </source>
</reference>
<reference key="2">
    <citation type="submission" date="1996-05" db="EMBL/GenBank/DDBJ databases">
        <authorList>
            <person name="Levorson J.P."/>
            <person name="Chlan C.A."/>
        </authorList>
    </citation>
    <scope>NUCLEOTIDE SEQUENCE OF 112-205</scope>
    <source>
        <strain>cv. Stoneville 887</strain>
        <tissue>Leaf</tissue>
    </source>
</reference>
<keyword id="KW-0119">Carbohydrate metabolism</keyword>
<keyword id="KW-0146">Chitin degradation</keyword>
<keyword id="KW-0147">Chitin-binding</keyword>
<keyword id="KW-1015">Disulfide bond</keyword>
<keyword id="KW-0326">Glycosidase</keyword>
<keyword id="KW-0378">Hydrolase</keyword>
<keyword id="KW-0611">Plant defense</keyword>
<keyword id="KW-0624">Polysaccharide degradation</keyword>
<keyword id="KW-1185">Reference proteome</keyword>
<dbReference type="EC" id="3.2.1.14"/>
<dbReference type="EMBL" id="U78888">
    <property type="protein sequence ID" value="AAB68047.1"/>
    <property type="molecule type" value="mRNA"/>
</dbReference>
<dbReference type="EMBL" id="U57408">
    <property type="protein sequence ID" value="AAB01339.1"/>
    <property type="molecule type" value="Genomic_DNA"/>
</dbReference>
<dbReference type="PIR" id="T10810">
    <property type="entry name" value="T10810"/>
</dbReference>
<dbReference type="SMR" id="Q39785"/>
<dbReference type="STRING" id="3635.Q39785"/>
<dbReference type="CAZy" id="CBM18">
    <property type="family name" value="Carbohydrate-Binding Module Family 18"/>
</dbReference>
<dbReference type="CAZy" id="GH19">
    <property type="family name" value="Glycoside Hydrolase Family 19"/>
</dbReference>
<dbReference type="PaxDb" id="3635-Q39785"/>
<dbReference type="Proteomes" id="UP000189702">
    <property type="component" value="Unplaced"/>
</dbReference>
<dbReference type="GO" id="GO:0008061">
    <property type="term" value="F:chitin binding"/>
    <property type="evidence" value="ECO:0007669"/>
    <property type="project" value="UniProtKB-KW"/>
</dbReference>
<dbReference type="GO" id="GO:0004568">
    <property type="term" value="F:chitinase activity"/>
    <property type="evidence" value="ECO:0000318"/>
    <property type="project" value="GO_Central"/>
</dbReference>
<dbReference type="GO" id="GO:0008843">
    <property type="term" value="F:endochitinase activity"/>
    <property type="evidence" value="ECO:0007669"/>
    <property type="project" value="UniProtKB-EC"/>
</dbReference>
<dbReference type="GO" id="GO:0016998">
    <property type="term" value="P:cell wall macromolecule catabolic process"/>
    <property type="evidence" value="ECO:0007669"/>
    <property type="project" value="InterPro"/>
</dbReference>
<dbReference type="GO" id="GO:0006032">
    <property type="term" value="P:chitin catabolic process"/>
    <property type="evidence" value="ECO:0007669"/>
    <property type="project" value="UniProtKB-KW"/>
</dbReference>
<dbReference type="GO" id="GO:0050832">
    <property type="term" value="P:defense response to fungus"/>
    <property type="evidence" value="ECO:0000318"/>
    <property type="project" value="GO_Central"/>
</dbReference>
<dbReference type="GO" id="GO:0000272">
    <property type="term" value="P:polysaccharide catabolic process"/>
    <property type="evidence" value="ECO:0007669"/>
    <property type="project" value="UniProtKB-KW"/>
</dbReference>
<dbReference type="CDD" id="cd00325">
    <property type="entry name" value="chitinase_GH19"/>
    <property type="match status" value="1"/>
</dbReference>
<dbReference type="CDD" id="cd06921">
    <property type="entry name" value="ChtBD1_GH19_hevein"/>
    <property type="match status" value="1"/>
</dbReference>
<dbReference type="FunFam" id="3.30.60.10:FF:000001">
    <property type="entry name" value="Basic endochitinase"/>
    <property type="match status" value="1"/>
</dbReference>
<dbReference type="FunFam" id="3.30.20.10:FF:000001">
    <property type="entry name" value="Endochitinase (Chitinase)"/>
    <property type="match status" value="1"/>
</dbReference>
<dbReference type="Gene3D" id="1.10.530.10">
    <property type="match status" value="1"/>
</dbReference>
<dbReference type="Gene3D" id="3.30.20.10">
    <property type="entry name" value="Endochitinase, domain 2"/>
    <property type="match status" value="1"/>
</dbReference>
<dbReference type="Gene3D" id="3.30.60.10">
    <property type="entry name" value="Endochitinase-like"/>
    <property type="match status" value="1"/>
</dbReference>
<dbReference type="InterPro" id="IPR001002">
    <property type="entry name" value="Chitin-bd_1"/>
</dbReference>
<dbReference type="InterPro" id="IPR018371">
    <property type="entry name" value="Chitin-binding_1_CS"/>
</dbReference>
<dbReference type="InterPro" id="IPR036861">
    <property type="entry name" value="Endochitinase-like_sf"/>
</dbReference>
<dbReference type="InterPro" id="IPR016283">
    <property type="entry name" value="Glyco_hydro_19"/>
</dbReference>
<dbReference type="InterPro" id="IPR000726">
    <property type="entry name" value="Glyco_hydro_19_cat"/>
</dbReference>
<dbReference type="InterPro" id="IPR023346">
    <property type="entry name" value="Lysozyme-like_dom_sf"/>
</dbReference>
<dbReference type="PANTHER" id="PTHR22595">
    <property type="entry name" value="CHITINASE-RELATED"/>
    <property type="match status" value="1"/>
</dbReference>
<dbReference type="PANTHER" id="PTHR22595:SF200">
    <property type="entry name" value="ENDOCHITINASE 1"/>
    <property type="match status" value="1"/>
</dbReference>
<dbReference type="Pfam" id="PF00187">
    <property type="entry name" value="Chitin_bind_1"/>
    <property type="match status" value="1"/>
</dbReference>
<dbReference type="Pfam" id="PF00182">
    <property type="entry name" value="Glyco_hydro_19"/>
    <property type="match status" value="1"/>
</dbReference>
<dbReference type="PIRSF" id="PIRSF001060">
    <property type="entry name" value="Endochitinase"/>
    <property type="match status" value="1"/>
</dbReference>
<dbReference type="PRINTS" id="PR00451">
    <property type="entry name" value="CHITINBINDNG"/>
</dbReference>
<dbReference type="SMART" id="SM00270">
    <property type="entry name" value="ChtBD1"/>
    <property type="match status" value="1"/>
</dbReference>
<dbReference type="SUPFAM" id="SSF53955">
    <property type="entry name" value="Lysozyme-like"/>
    <property type="match status" value="1"/>
</dbReference>
<dbReference type="SUPFAM" id="SSF57016">
    <property type="entry name" value="Plant lectins/antimicrobial peptides"/>
    <property type="match status" value="1"/>
</dbReference>
<dbReference type="PROSITE" id="PS00026">
    <property type="entry name" value="CHIT_BIND_I_1"/>
    <property type="match status" value="1"/>
</dbReference>
<dbReference type="PROSITE" id="PS50941">
    <property type="entry name" value="CHIT_BIND_I_2"/>
    <property type="match status" value="1"/>
</dbReference>
<dbReference type="PROSITE" id="PS00773">
    <property type="entry name" value="CHITINASE_19_1"/>
    <property type="match status" value="1"/>
</dbReference>
<dbReference type="PROSITE" id="PS00774">
    <property type="entry name" value="CHITINASE_19_2"/>
    <property type="match status" value="1"/>
</dbReference>
<accession>Q39785</accession>
<comment type="function">
    <text>Defense against chitin-containing fungal pathogens.</text>
</comment>
<comment type="catalytic activity">
    <reaction>
        <text>Random endo-hydrolysis of N-acetyl-beta-D-glucosaminide (1-&gt;4)-beta-linkages in chitin and chitodextrins.</text>
        <dbReference type="EC" id="3.2.1.14"/>
    </reaction>
</comment>
<comment type="similarity">
    <text evidence="4">Belongs to the glycosyl hydrolase 19 family. Chitinase class I subfamily.</text>
</comment>
<proteinExistence type="evidence at transcript level"/>